<protein>
    <recommendedName>
        <fullName evidence="1">Small ribosomal subunit protein eS17</fullName>
    </recommendedName>
    <alternativeName>
        <fullName evidence="2">30S ribosomal protein S17e</fullName>
    </alternativeName>
</protein>
<organism>
    <name type="scientific">Pyrobaculum aerophilum (strain ATCC 51768 / DSM 7523 / JCM 9630 / CIP 104966 / NBRC 100827 / IM2)</name>
    <dbReference type="NCBI Taxonomy" id="178306"/>
    <lineage>
        <taxon>Archaea</taxon>
        <taxon>Thermoproteota</taxon>
        <taxon>Thermoprotei</taxon>
        <taxon>Thermoproteales</taxon>
        <taxon>Thermoproteaceae</taxon>
        <taxon>Pyrobaculum</taxon>
    </lineage>
</organism>
<proteinExistence type="inferred from homology"/>
<comment type="similarity">
    <text evidence="1">Belongs to the eukaryotic ribosomal protein eS17 family.</text>
</comment>
<feature type="chain" id="PRO_0000141561" description="Small ribosomal subunit protein eS17">
    <location>
        <begin position="1"/>
        <end position="71"/>
    </location>
</feature>
<name>RS17E_PYRAE</name>
<gene>
    <name evidence="1" type="primary">rps17e</name>
    <name type="ordered locus">PAE0804</name>
</gene>
<evidence type="ECO:0000255" key="1">
    <source>
        <dbReference type="HAMAP-Rule" id="MF_00511"/>
    </source>
</evidence>
<evidence type="ECO:0000305" key="2"/>
<dbReference type="EMBL" id="AE009441">
    <property type="protein sequence ID" value="AAL63039.1"/>
    <property type="molecule type" value="Genomic_DNA"/>
</dbReference>
<dbReference type="RefSeq" id="WP_011007511.1">
    <property type="nucleotide sequence ID" value="NC_003364.1"/>
</dbReference>
<dbReference type="SMR" id="Q8ZYF4"/>
<dbReference type="FunCoup" id="Q8ZYF4">
    <property type="interactions" value="80"/>
</dbReference>
<dbReference type="STRING" id="178306.PAE0804"/>
<dbReference type="EnsemblBacteria" id="AAL63039">
    <property type="protein sequence ID" value="AAL63039"/>
    <property type="gene ID" value="PAE0804"/>
</dbReference>
<dbReference type="GeneID" id="1465268"/>
<dbReference type="KEGG" id="pai:PAE0804"/>
<dbReference type="PATRIC" id="fig|178306.9.peg.588"/>
<dbReference type="eggNOG" id="arCOG01885">
    <property type="taxonomic scope" value="Archaea"/>
</dbReference>
<dbReference type="HOGENOM" id="CLU_176720_2_0_2"/>
<dbReference type="InParanoid" id="Q8ZYF4"/>
<dbReference type="Proteomes" id="UP000002439">
    <property type="component" value="Chromosome"/>
</dbReference>
<dbReference type="GO" id="GO:0005829">
    <property type="term" value="C:cytosol"/>
    <property type="evidence" value="ECO:0007669"/>
    <property type="project" value="UniProtKB-ARBA"/>
</dbReference>
<dbReference type="GO" id="GO:1990904">
    <property type="term" value="C:ribonucleoprotein complex"/>
    <property type="evidence" value="ECO:0007669"/>
    <property type="project" value="UniProtKB-KW"/>
</dbReference>
<dbReference type="GO" id="GO:0005840">
    <property type="term" value="C:ribosome"/>
    <property type="evidence" value="ECO:0007669"/>
    <property type="project" value="UniProtKB-KW"/>
</dbReference>
<dbReference type="GO" id="GO:0003735">
    <property type="term" value="F:structural constituent of ribosome"/>
    <property type="evidence" value="ECO:0007669"/>
    <property type="project" value="InterPro"/>
</dbReference>
<dbReference type="GO" id="GO:0006412">
    <property type="term" value="P:translation"/>
    <property type="evidence" value="ECO:0007669"/>
    <property type="project" value="UniProtKB-UniRule"/>
</dbReference>
<dbReference type="Gene3D" id="1.10.60.20">
    <property type="entry name" value="Ribosomal protein S17e-like"/>
    <property type="match status" value="1"/>
</dbReference>
<dbReference type="HAMAP" id="MF_00511">
    <property type="entry name" value="Ribosomal_eS17"/>
    <property type="match status" value="1"/>
</dbReference>
<dbReference type="InterPro" id="IPR001210">
    <property type="entry name" value="Ribosomal_eS17"/>
</dbReference>
<dbReference type="InterPro" id="IPR018273">
    <property type="entry name" value="Ribosomal_eS17_CS"/>
</dbReference>
<dbReference type="InterPro" id="IPR036401">
    <property type="entry name" value="Ribosomal_eS17_sf"/>
</dbReference>
<dbReference type="NCBIfam" id="NF002242">
    <property type="entry name" value="PRK01151.1"/>
    <property type="match status" value="1"/>
</dbReference>
<dbReference type="PANTHER" id="PTHR10732">
    <property type="entry name" value="40S RIBOSOMAL PROTEIN S17"/>
    <property type="match status" value="1"/>
</dbReference>
<dbReference type="PANTHER" id="PTHR10732:SF0">
    <property type="entry name" value="40S RIBOSOMAL PROTEIN S17"/>
    <property type="match status" value="1"/>
</dbReference>
<dbReference type="Pfam" id="PF00833">
    <property type="entry name" value="Ribosomal_S17e"/>
    <property type="match status" value="1"/>
</dbReference>
<dbReference type="SUPFAM" id="SSF116820">
    <property type="entry name" value="Rps17e-like"/>
    <property type="match status" value="1"/>
</dbReference>
<dbReference type="PROSITE" id="PS00712">
    <property type="entry name" value="RIBOSOMAL_S17E"/>
    <property type="match status" value="1"/>
</dbReference>
<reference key="1">
    <citation type="journal article" date="2002" name="Proc. Natl. Acad. Sci. U.S.A.">
        <title>Genome sequence of the hyperthermophilic crenarchaeon Pyrobaculum aerophilum.</title>
        <authorList>
            <person name="Fitz-Gibbon S.T."/>
            <person name="Ladner H."/>
            <person name="Kim U.-J."/>
            <person name="Stetter K.O."/>
            <person name="Simon M.I."/>
            <person name="Miller J.H."/>
        </authorList>
    </citation>
    <scope>NUCLEOTIDE SEQUENCE [LARGE SCALE GENOMIC DNA]</scope>
    <source>
        <strain>ATCC 51768 / DSM 7523 / JCM 9630 / CIP 104966 / NBRC 100827 / IM2</strain>
    </source>
</reference>
<accession>Q8ZYF4</accession>
<sequence>MGRVRPRYIKSLGEKLLEMYPDKFTDNFEENKKAVAELADIPSKTVRNKVAGYITRLVKRRKAQEKAESAA</sequence>
<keyword id="KW-1185">Reference proteome</keyword>
<keyword id="KW-0687">Ribonucleoprotein</keyword>
<keyword id="KW-0689">Ribosomal protein</keyword>